<name>ARGC_STAAR</name>
<proteinExistence type="inferred from homology"/>
<evidence type="ECO:0000255" key="1">
    <source>
        <dbReference type="HAMAP-Rule" id="MF_00150"/>
    </source>
</evidence>
<evidence type="ECO:0000305" key="2"/>
<feature type="chain" id="PRO_0000112451" description="N-acetyl-gamma-glutamyl-phosphate reductase">
    <location>
        <begin position="1"/>
        <end position="343"/>
    </location>
</feature>
<feature type="active site" evidence="1">
    <location>
        <position position="147"/>
    </location>
</feature>
<dbReference type="EC" id="1.2.1.38" evidence="1"/>
<dbReference type="EMBL" id="BX571856">
    <property type="protein sequence ID" value="CAG39212.1"/>
    <property type="status" value="ALT_INIT"/>
    <property type="molecule type" value="Genomic_DNA"/>
</dbReference>
<dbReference type="RefSeq" id="WP_000598485.1">
    <property type="nucleotide sequence ID" value="NC_002952.2"/>
</dbReference>
<dbReference type="SMR" id="Q6GKC2"/>
<dbReference type="KEGG" id="sar:SAR0185"/>
<dbReference type="HOGENOM" id="CLU_006384_0_1_9"/>
<dbReference type="UniPathway" id="UPA00068">
    <property type="reaction ID" value="UER00108"/>
</dbReference>
<dbReference type="Proteomes" id="UP000000596">
    <property type="component" value="Chromosome"/>
</dbReference>
<dbReference type="GO" id="GO:0005737">
    <property type="term" value="C:cytoplasm"/>
    <property type="evidence" value="ECO:0007669"/>
    <property type="project" value="UniProtKB-SubCell"/>
</dbReference>
<dbReference type="GO" id="GO:0003942">
    <property type="term" value="F:N-acetyl-gamma-glutamyl-phosphate reductase activity"/>
    <property type="evidence" value="ECO:0007669"/>
    <property type="project" value="UniProtKB-UniRule"/>
</dbReference>
<dbReference type="GO" id="GO:0051287">
    <property type="term" value="F:NAD binding"/>
    <property type="evidence" value="ECO:0007669"/>
    <property type="project" value="InterPro"/>
</dbReference>
<dbReference type="GO" id="GO:0070401">
    <property type="term" value="F:NADP+ binding"/>
    <property type="evidence" value="ECO:0007669"/>
    <property type="project" value="InterPro"/>
</dbReference>
<dbReference type="GO" id="GO:0006526">
    <property type="term" value="P:L-arginine biosynthetic process"/>
    <property type="evidence" value="ECO:0007669"/>
    <property type="project" value="UniProtKB-UniRule"/>
</dbReference>
<dbReference type="CDD" id="cd23934">
    <property type="entry name" value="AGPR_1_C"/>
    <property type="match status" value="1"/>
</dbReference>
<dbReference type="CDD" id="cd17895">
    <property type="entry name" value="AGPR_1_N"/>
    <property type="match status" value="1"/>
</dbReference>
<dbReference type="FunFam" id="3.30.360.10:FF:000014">
    <property type="entry name" value="N-acetyl-gamma-glutamyl-phosphate reductase"/>
    <property type="match status" value="1"/>
</dbReference>
<dbReference type="Gene3D" id="3.30.360.10">
    <property type="entry name" value="Dihydrodipicolinate Reductase, domain 2"/>
    <property type="match status" value="1"/>
</dbReference>
<dbReference type="Gene3D" id="3.40.50.720">
    <property type="entry name" value="NAD(P)-binding Rossmann-like Domain"/>
    <property type="match status" value="1"/>
</dbReference>
<dbReference type="HAMAP" id="MF_00150">
    <property type="entry name" value="ArgC_type1"/>
    <property type="match status" value="1"/>
</dbReference>
<dbReference type="InterPro" id="IPR023013">
    <property type="entry name" value="AGPR_AS"/>
</dbReference>
<dbReference type="InterPro" id="IPR000706">
    <property type="entry name" value="AGPR_type-1"/>
</dbReference>
<dbReference type="InterPro" id="IPR036291">
    <property type="entry name" value="NAD(P)-bd_dom_sf"/>
</dbReference>
<dbReference type="InterPro" id="IPR050085">
    <property type="entry name" value="NAGSA_dehydrogenase"/>
</dbReference>
<dbReference type="InterPro" id="IPR000534">
    <property type="entry name" value="Semialdehyde_DH_NAD-bd"/>
</dbReference>
<dbReference type="NCBIfam" id="TIGR01850">
    <property type="entry name" value="argC"/>
    <property type="match status" value="1"/>
</dbReference>
<dbReference type="PANTHER" id="PTHR32338:SF10">
    <property type="entry name" value="N-ACETYL-GAMMA-GLUTAMYL-PHOSPHATE REDUCTASE, CHLOROPLASTIC-RELATED"/>
    <property type="match status" value="1"/>
</dbReference>
<dbReference type="PANTHER" id="PTHR32338">
    <property type="entry name" value="N-ACETYL-GAMMA-GLUTAMYL-PHOSPHATE REDUCTASE, CHLOROPLASTIC-RELATED-RELATED"/>
    <property type="match status" value="1"/>
</dbReference>
<dbReference type="Pfam" id="PF01118">
    <property type="entry name" value="Semialdhyde_dh"/>
    <property type="match status" value="1"/>
</dbReference>
<dbReference type="Pfam" id="PF22698">
    <property type="entry name" value="Semialdhyde_dhC_1"/>
    <property type="match status" value="1"/>
</dbReference>
<dbReference type="SMART" id="SM00859">
    <property type="entry name" value="Semialdhyde_dh"/>
    <property type="match status" value="1"/>
</dbReference>
<dbReference type="SUPFAM" id="SSF55347">
    <property type="entry name" value="Glyceraldehyde-3-phosphate dehydrogenase-like, C-terminal domain"/>
    <property type="match status" value="1"/>
</dbReference>
<dbReference type="SUPFAM" id="SSF51735">
    <property type="entry name" value="NAD(P)-binding Rossmann-fold domains"/>
    <property type="match status" value="1"/>
</dbReference>
<dbReference type="PROSITE" id="PS01224">
    <property type="entry name" value="ARGC"/>
    <property type="match status" value="1"/>
</dbReference>
<protein>
    <recommendedName>
        <fullName evidence="1">N-acetyl-gamma-glutamyl-phosphate reductase</fullName>
        <shortName evidence="1">AGPR</shortName>
        <ecNumber evidence="1">1.2.1.38</ecNumber>
    </recommendedName>
    <alternativeName>
        <fullName evidence="1">N-acetyl-glutamate semialdehyde dehydrogenase</fullName>
        <shortName evidence="1">NAGSA dehydrogenase</shortName>
    </alternativeName>
</protein>
<comment type="function">
    <text evidence="1">Catalyzes the NADPH-dependent reduction of N-acetyl-5-glutamyl phosphate to yield N-acetyl-L-glutamate 5-semialdehyde.</text>
</comment>
<comment type="catalytic activity">
    <reaction evidence="1">
        <text>N-acetyl-L-glutamate 5-semialdehyde + phosphate + NADP(+) = N-acetyl-L-glutamyl 5-phosphate + NADPH + H(+)</text>
        <dbReference type="Rhea" id="RHEA:21588"/>
        <dbReference type="ChEBI" id="CHEBI:15378"/>
        <dbReference type="ChEBI" id="CHEBI:29123"/>
        <dbReference type="ChEBI" id="CHEBI:43474"/>
        <dbReference type="ChEBI" id="CHEBI:57783"/>
        <dbReference type="ChEBI" id="CHEBI:57936"/>
        <dbReference type="ChEBI" id="CHEBI:58349"/>
        <dbReference type="EC" id="1.2.1.38"/>
    </reaction>
</comment>
<comment type="pathway">
    <text evidence="1">Amino-acid biosynthesis; L-arginine biosynthesis; N(2)-acetyl-L-ornithine from L-glutamate: step 3/4.</text>
</comment>
<comment type="subcellular location">
    <subcellularLocation>
        <location evidence="1">Cytoplasm</location>
    </subcellularLocation>
</comment>
<comment type="similarity">
    <text evidence="1">Belongs to the NAGSA dehydrogenase family. Type 1 subfamily.</text>
</comment>
<comment type="sequence caution" evidence="2">
    <conflict type="erroneous initiation">
        <sequence resource="EMBL-CDS" id="CAG39212"/>
    </conflict>
</comment>
<keyword id="KW-0028">Amino-acid biosynthesis</keyword>
<keyword id="KW-0055">Arginine biosynthesis</keyword>
<keyword id="KW-0963">Cytoplasm</keyword>
<keyword id="KW-0521">NADP</keyword>
<keyword id="KW-0560">Oxidoreductase</keyword>
<organism>
    <name type="scientific">Staphylococcus aureus (strain MRSA252)</name>
    <dbReference type="NCBI Taxonomy" id="282458"/>
    <lineage>
        <taxon>Bacteria</taxon>
        <taxon>Bacillati</taxon>
        <taxon>Bacillota</taxon>
        <taxon>Bacilli</taxon>
        <taxon>Bacillales</taxon>
        <taxon>Staphylococcaceae</taxon>
        <taxon>Staphylococcus</taxon>
    </lineage>
</organism>
<gene>
    <name evidence="1" type="primary">argC</name>
    <name type="ordered locus">SAR0185</name>
</gene>
<reference key="1">
    <citation type="journal article" date="2004" name="Proc. Natl. Acad. Sci. U.S.A.">
        <title>Complete genomes of two clinical Staphylococcus aureus strains: evidence for the rapid evolution of virulence and drug resistance.</title>
        <authorList>
            <person name="Holden M.T.G."/>
            <person name="Feil E.J."/>
            <person name="Lindsay J.A."/>
            <person name="Peacock S.J."/>
            <person name="Day N.P.J."/>
            <person name="Enright M.C."/>
            <person name="Foster T.J."/>
            <person name="Moore C.E."/>
            <person name="Hurst L."/>
            <person name="Atkin R."/>
            <person name="Barron A."/>
            <person name="Bason N."/>
            <person name="Bentley S.D."/>
            <person name="Chillingworth C."/>
            <person name="Chillingworth T."/>
            <person name="Churcher C."/>
            <person name="Clark L."/>
            <person name="Corton C."/>
            <person name="Cronin A."/>
            <person name="Doggett J."/>
            <person name="Dowd L."/>
            <person name="Feltwell T."/>
            <person name="Hance Z."/>
            <person name="Harris B."/>
            <person name="Hauser H."/>
            <person name="Holroyd S."/>
            <person name="Jagels K."/>
            <person name="James K.D."/>
            <person name="Lennard N."/>
            <person name="Line A."/>
            <person name="Mayes R."/>
            <person name="Moule S."/>
            <person name="Mungall K."/>
            <person name="Ormond D."/>
            <person name="Quail M.A."/>
            <person name="Rabbinowitsch E."/>
            <person name="Rutherford K.M."/>
            <person name="Sanders M."/>
            <person name="Sharp S."/>
            <person name="Simmonds M."/>
            <person name="Stevens K."/>
            <person name="Whitehead S."/>
            <person name="Barrell B.G."/>
            <person name="Spratt B.G."/>
            <person name="Parkhill J."/>
        </authorList>
    </citation>
    <scope>NUCLEOTIDE SEQUENCE [LARGE SCALE GENOMIC DNA]</scope>
    <source>
        <strain>MRSA252</strain>
    </source>
</reference>
<sequence>MIKVGIVGGSGYGAIELIRLLQTHPHVTIAHIYSHSKVDEPLKLTFPHLQHIMQHFEALTVDNNDCDVIFFATPAPVSKTCIPPLVEKGIHVIDLSGAFRIKNREIYEAYYKETAAAQDDLNHAIYSISEWQSLDNNGTKLISNPGCFPTATLLALHPLISEKIVDLSSIIIDAKTGVSGAGRSLSQRVHFSEMNENLSAYAIGNHKHKPEIEQYLSIIAGQDVSVIFTPHLVPMARGILSTIYVKLSSEYTTESLHKLMTSYYANQPFVRIRDIGTFPTTKEVLGSNYCDIGIYVDETTQTAILVSVIDNLVKGASGQAIQNLNILYDFEVTTGLKQSPVYP</sequence>
<accession>Q6GKC2</accession>